<reference key="1">
    <citation type="journal article" date="1999" name="Nature">
        <title>Genomic sequence comparison of two unrelated isolates of the human gastric pathogen Helicobacter pylori.</title>
        <authorList>
            <person name="Alm R.A."/>
            <person name="Ling L.-S.L."/>
            <person name="Moir D.T."/>
            <person name="King B.L."/>
            <person name="Brown E.D."/>
            <person name="Doig P.C."/>
            <person name="Smith D.R."/>
            <person name="Noonan B."/>
            <person name="Guild B.C."/>
            <person name="deJonge B.L."/>
            <person name="Carmel G."/>
            <person name="Tummino P.J."/>
            <person name="Caruso A."/>
            <person name="Uria-Nickelsen M."/>
            <person name="Mills D.M."/>
            <person name="Ives C."/>
            <person name="Gibson R."/>
            <person name="Merberg D."/>
            <person name="Mills S.D."/>
            <person name="Jiang Q."/>
            <person name="Taylor D.E."/>
            <person name="Vovis G.F."/>
            <person name="Trust T.J."/>
        </authorList>
    </citation>
    <scope>NUCLEOTIDE SEQUENCE [LARGE SCALE GENOMIC DNA]</scope>
    <source>
        <strain>J99 / ATCC 700824</strain>
    </source>
</reference>
<feature type="signal peptide" evidence="2">
    <location>
        <begin position="1"/>
        <end position="25"/>
    </location>
</feature>
<feature type="chain" id="PRO_0000013197" description="Putative beta-lactamase HcpC">
    <location>
        <begin position="26"/>
        <end position="290"/>
    </location>
</feature>
<feature type="repeat" description="TPR 1">
    <location>
        <begin position="29"/>
        <end position="62"/>
    </location>
</feature>
<feature type="repeat" description="TPR 2">
    <location>
        <begin position="64"/>
        <end position="98"/>
    </location>
</feature>
<feature type="repeat" description="TPR 3">
    <location>
        <begin position="100"/>
        <end position="133"/>
    </location>
</feature>
<feature type="repeat" description="TPR 4">
    <location>
        <begin position="134"/>
        <end position="170"/>
    </location>
</feature>
<feature type="repeat" description="TPR 5">
    <location>
        <begin position="172"/>
        <end position="205"/>
    </location>
</feature>
<feature type="repeat" description="TPR 6">
    <location>
        <begin position="206"/>
        <end position="242"/>
    </location>
</feature>
<feature type="repeat" description="TPR 7">
    <location>
        <begin position="244"/>
        <end position="278"/>
    </location>
</feature>
<feature type="disulfide bond" evidence="2">
    <location>
        <begin position="56"/>
        <end position="64"/>
    </location>
</feature>
<feature type="disulfide bond" evidence="2">
    <location>
        <begin position="92"/>
        <end position="100"/>
    </location>
</feature>
<feature type="disulfide bond" evidence="2">
    <location>
        <begin position="128"/>
        <end position="136"/>
    </location>
</feature>
<feature type="disulfide bond" evidence="2">
    <location>
        <begin position="164"/>
        <end position="172"/>
    </location>
</feature>
<feature type="disulfide bond" evidence="2">
    <location>
        <begin position="200"/>
        <end position="208"/>
    </location>
</feature>
<feature type="disulfide bond" evidence="2">
    <location>
        <begin position="236"/>
        <end position="244"/>
    </location>
</feature>
<feature type="disulfide bond" evidence="2">
    <location>
        <begin position="272"/>
        <end position="280"/>
    </location>
</feature>
<keyword id="KW-0046">Antibiotic resistance</keyword>
<keyword id="KW-1015">Disulfide bond</keyword>
<keyword id="KW-0378">Hydrolase</keyword>
<keyword id="KW-0677">Repeat</keyword>
<keyword id="KW-0964">Secreted</keyword>
<keyword id="KW-0732">Signal</keyword>
<keyword id="KW-0802">TPR repeat</keyword>
<name>HCPC_HELPJ</name>
<comment type="function">
    <text evidence="1">May hydrolyze 6-aminopenicillinic acid and 7-aminocephalosporanic acid (ACA) derivatives.</text>
</comment>
<comment type="catalytic activity">
    <reaction>
        <text>a beta-lactam + H2O = a substituted beta-amino acid</text>
        <dbReference type="Rhea" id="RHEA:20401"/>
        <dbReference type="ChEBI" id="CHEBI:15377"/>
        <dbReference type="ChEBI" id="CHEBI:35627"/>
        <dbReference type="ChEBI" id="CHEBI:140347"/>
        <dbReference type="EC" id="3.5.2.6"/>
    </reaction>
</comment>
<comment type="subcellular location">
    <subcellularLocation>
        <location evidence="3">Secreted</location>
    </subcellularLocation>
</comment>
<comment type="similarity">
    <text evidence="3">Belongs to the hcp beta-lactamase family.</text>
</comment>
<proteinExistence type="inferred from homology"/>
<protein>
    <recommendedName>
        <fullName>Putative beta-lactamase HcpC</fullName>
        <ecNumber>3.5.2.6</ecNumber>
    </recommendedName>
    <alternativeName>
        <fullName>Cysteine-rich protein C</fullName>
    </alternativeName>
</protein>
<gene>
    <name type="primary">hcpC</name>
    <name type="ordered locus">jhp_1024</name>
</gene>
<accession>Q9ZKB5</accession>
<organism>
    <name type="scientific">Helicobacter pylori (strain J99 / ATCC 700824)</name>
    <name type="common">Campylobacter pylori J99</name>
    <dbReference type="NCBI Taxonomy" id="85963"/>
    <lineage>
        <taxon>Bacteria</taxon>
        <taxon>Pseudomonadati</taxon>
        <taxon>Campylobacterota</taxon>
        <taxon>Epsilonproteobacteria</taxon>
        <taxon>Campylobacterales</taxon>
        <taxon>Helicobacteraceae</taxon>
        <taxon>Helicobacter</taxon>
    </lineage>
</organism>
<dbReference type="EC" id="3.5.2.6"/>
<dbReference type="EMBL" id="AE001439">
    <property type="protein sequence ID" value="AAD06595.1"/>
    <property type="molecule type" value="Genomic_DNA"/>
</dbReference>
<dbReference type="PIR" id="C71859">
    <property type="entry name" value="C71859"/>
</dbReference>
<dbReference type="RefSeq" id="WP_000892769.1">
    <property type="nucleotide sequence ID" value="NZ_CP011330.1"/>
</dbReference>
<dbReference type="SMR" id="Q9ZKB5"/>
<dbReference type="KEGG" id="hpj:jhp_1024"/>
<dbReference type="PATRIC" id="fig|85963.30.peg.1567"/>
<dbReference type="eggNOG" id="COG0790">
    <property type="taxonomic scope" value="Bacteria"/>
</dbReference>
<dbReference type="Proteomes" id="UP000000804">
    <property type="component" value="Chromosome"/>
</dbReference>
<dbReference type="GO" id="GO:0005576">
    <property type="term" value="C:extracellular region"/>
    <property type="evidence" value="ECO:0007669"/>
    <property type="project" value="UniProtKB-SubCell"/>
</dbReference>
<dbReference type="GO" id="GO:0008800">
    <property type="term" value="F:beta-lactamase activity"/>
    <property type="evidence" value="ECO:0007669"/>
    <property type="project" value="UniProtKB-EC"/>
</dbReference>
<dbReference type="GO" id="GO:0046677">
    <property type="term" value="P:response to antibiotic"/>
    <property type="evidence" value="ECO:0007669"/>
    <property type="project" value="UniProtKB-KW"/>
</dbReference>
<dbReference type="Gene3D" id="1.25.40.10">
    <property type="entry name" value="Tetratricopeptide repeat domain"/>
    <property type="match status" value="1"/>
</dbReference>
<dbReference type="InterPro" id="IPR040239">
    <property type="entry name" value="HcpB-like"/>
</dbReference>
<dbReference type="InterPro" id="IPR006597">
    <property type="entry name" value="Sel1-like"/>
</dbReference>
<dbReference type="InterPro" id="IPR011990">
    <property type="entry name" value="TPR-like_helical_dom_sf"/>
</dbReference>
<dbReference type="InterPro" id="IPR019734">
    <property type="entry name" value="TPR_rpt"/>
</dbReference>
<dbReference type="PANTHER" id="PTHR13891">
    <property type="entry name" value="CYTOCHROME C OXIDASE ASSEMBLY FACTOR 7"/>
    <property type="match status" value="1"/>
</dbReference>
<dbReference type="PANTHER" id="PTHR13891:SF1">
    <property type="entry name" value="CYTOCHROME C OXIDASE ASSEMBLY FACTOR 7"/>
    <property type="match status" value="1"/>
</dbReference>
<dbReference type="Pfam" id="PF08238">
    <property type="entry name" value="Sel1"/>
    <property type="match status" value="7"/>
</dbReference>
<dbReference type="SMART" id="SM00671">
    <property type="entry name" value="SEL1"/>
    <property type="match status" value="7"/>
</dbReference>
<dbReference type="SMART" id="SM00028">
    <property type="entry name" value="TPR"/>
    <property type="match status" value="4"/>
</dbReference>
<dbReference type="SUPFAM" id="SSF81901">
    <property type="entry name" value="HCP-like"/>
    <property type="match status" value="1"/>
</dbReference>
<dbReference type="PROSITE" id="PS50005">
    <property type="entry name" value="TPR"/>
    <property type="match status" value="1"/>
</dbReference>
<sequence>MLENVKKSLFRVLCLGALCLGGLMAEQDPKELVGLGAKSYKEQDFTQAKKYFEKACDLKENSGCFNLGVLYYQGHGVEKNLKKAASFYSKACDLNYSNGCHLLGNLYYSGQGVSQNTNKALQYYSKACDLKYAEGCASLGGIYHDGKVVTRDFKKAVEYFTKACDLNDGDGCTILGSLYDAGRGTPKDLKKALASYDKACDLKDSPGCFNAGNMYHHGEGAAKNFKEALARYSKACELENGGGCFNLGAMQYNGEGATRNEKQAIENFKKGCKLGAKGACDILKQLKIKV</sequence>
<evidence type="ECO:0000250" key="1"/>
<evidence type="ECO:0000255" key="2"/>
<evidence type="ECO:0000305" key="3"/>